<reference key="1">
    <citation type="journal article" date="2008" name="Mol. Biol. Evol.">
        <title>Genome evolution of Wolbachia strain wPip from the Culex pipiens group.</title>
        <authorList>
            <person name="Klasson L."/>
            <person name="Walker T."/>
            <person name="Sebaihia M."/>
            <person name="Sanders M.J."/>
            <person name="Quail M.A."/>
            <person name="Lord A."/>
            <person name="Sanders S."/>
            <person name="Earl J."/>
            <person name="O'Neill S.L."/>
            <person name="Thomson N."/>
            <person name="Sinkins S.P."/>
            <person name="Parkhill J."/>
        </authorList>
    </citation>
    <scope>NUCLEOTIDE SEQUENCE [LARGE SCALE GENOMIC DNA]</scope>
    <source>
        <strain>wPip</strain>
    </source>
</reference>
<accession>B3CMZ0</accession>
<proteinExistence type="inferred from homology"/>
<evidence type="ECO:0000255" key="1">
    <source>
        <dbReference type="HAMAP-Rule" id="MF_00236"/>
    </source>
</evidence>
<name>TATA_WOLPP</name>
<sequence length="55" mass="6107">MSLGPWQLFLVLIIILVLFGAGRLPQVMGDLGKGIKNLKQELKDSEKLSSNEPDR</sequence>
<organism>
    <name type="scientific">Wolbachia pipientis subsp. Culex pipiens (strain wPip)</name>
    <dbReference type="NCBI Taxonomy" id="570417"/>
    <lineage>
        <taxon>Bacteria</taxon>
        <taxon>Pseudomonadati</taxon>
        <taxon>Pseudomonadota</taxon>
        <taxon>Alphaproteobacteria</taxon>
        <taxon>Rickettsiales</taxon>
        <taxon>Anaplasmataceae</taxon>
        <taxon>Wolbachieae</taxon>
        <taxon>Wolbachia</taxon>
    </lineage>
</organism>
<dbReference type="EMBL" id="AM999887">
    <property type="protein sequence ID" value="CAQ54183.1"/>
    <property type="molecule type" value="Genomic_DNA"/>
</dbReference>
<dbReference type="RefSeq" id="WP_006013840.1">
    <property type="nucleotide sequence ID" value="NC_010981.1"/>
</dbReference>
<dbReference type="SMR" id="B3CMZ0"/>
<dbReference type="KEGG" id="wpi:WP0074"/>
<dbReference type="eggNOG" id="COG1826">
    <property type="taxonomic scope" value="Bacteria"/>
</dbReference>
<dbReference type="HOGENOM" id="CLU_086034_6_2_5"/>
<dbReference type="Proteomes" id="UP000008814">
    <property type="component" value="Chromosome"/>
</dbReference>
<dbReference type="GO" id="GO:0033281">
    <property type="term" value="C:TAT protein transport complex"/>
    <property type="evidence" value="ECO:0007669"/>
    <property type="project" value="UniProtKB-UniRule"/>
</dbReference>
<dbReference type="GO" id="GO:0008320">
    <property type="term" value="F:protein transmembrane transporter activity"/>
    <property type="evidence" value="ECO:0007669"/>
    <property type="project" value="UniProtKB-UniRule"/>
</dbReference>
<dbReference type="GO" id="GO:0043953">
    <property type="term" value="P:protein transport by the Tat complex"/>
    <property type="evidence" value="ECO:0007669"/>
    <property type="project" value="UniProtKB-UniRule"/>
</dbReference>
<dbReference type="Gene3D" id="1.20.5.3310">
    <property type="match status" value="1"/>
</dbReference>
<dbReference type="HAMAP" id="MF_00236">
    <property type="entry name" value="TatA_E"/>
    <property type="match status" value="1"/>
</dbReference>
<dbReference type="InterPro" id="IPR003369">
    <property type="entry name" value="TatA/B/E"/>
</dbReference>
<dbReference type="InterPro" id="IPR006312">
    <property type="entry name" value="TatA/E"/>
</dbReference>
<dbReference type="NCBIfam" id="TIGR01411">
    <property type="entry name" value="tatAE"/>
    <property type="match status" value="1"/>
</dbReference>
<dbReference type="PANTHER" id="PTHR42982">
    <property type="entry name" value="SEC-INDEPENDENT PROTEIN TRANSLOCASE PROTEIN TATA"/>
    <property type="match status" value="1"/>
</dbReference>
<dbReference type="PANTHER" id="PTHR42982:SF1">
    <property type="entry name" value="SEC-INDEPENDENT PROTEIN TRANSLOCASE PROTEIN TATA"/>
    <property type="match status" value="1"/>
</dbReference>
<dbReference type="Pfam" id="PF02416">
    <property type="entry name" value="TatA_B_E"/>
    <property type="match status" value="1"/>
</dbReference>
<gene>
    <name evidence="1" type="primary">tatA</name>
    <name type="ordered locus">WP0074</name>
</gene>
<protein>
    <recommendedName>
        <fullName evidence="1">Sec-independent protein translocase protein TatA</fullName>
    </recommendedName>
</protein>
<keyword id="KW-1003">Cell membrane</keyword>
<keyword id="KW-0472">Membrane</keyword>
<keyword id="KW-0653">Protein transport</keyword>
<keyword id="KW-0811">Translocation</keyword>
<keyword id="KW-0812">Transmembrane</keyword>
<keyword id="KW-1133">Transmembrane helix</keyword>
<keyword id="KW-0813">Transport</keyword>
<comment type="function">
    <text evidence="1">Part of the twin-arginine translocation (Tat) system that transports large folded proteins containing a characteristic twin-arginine motif in their signal peptide across membranes. TatA could form the protein-conducting channel of the Tat system.</text>
</comment>
<comment type="subunit">
    <text evidence="1">The Tat system comprises two distinct complexes: a TatABC complex, containing multiple copies of TatA, TatB and TatC subunits, and a separate TatA complex, containing only TatA subunits. Substrates initially bind to the TatABC complex, which probably triggers association of the separate TatA complex to form the active translocon.</text>
</comment>
<comment type="subcellular location">
    <subcellularLocation>
        <location evidence="1">Cell membrane</location>
        <topology evidence="1">Single-pass membrane protein</topology>
    </subcellularLocation>
</comment>
<comment type="similarity">
    <text evidence="1">Belongs to the TatA/E family.</text>
</comment>
<feature type="chain" id="PRO_1000197914" description="Sec-independent protein translocase protein TatA">
    <location>
        <begin position="1"/>
        <end position="55"/>
    </location>
</feature>
<feature type="transmembrane region" description="Helical" evidence="1">
    <location>
        <begin position="1"/>
        <end position="21"/>
    </location>
</feature>